<proteinExistence type="inferred from homology"/>
<evidence type="ECO:0000255" key="1">
    <source>
        <dbReference type="HAMAP-Rule" id="MF_01366"/>
    </source>
</evidence>
<evidence type="ECO:0000305" key="2"/>
<sequence length="144" mass="16447">MSTFMAKAEDVERKWYVIDAADKPLGRVASEAARLLRGKHKPIFTPHVDTGDHVIIINAEKVALTGKKLTQKLYYHHSRYPGGMTLINYGTLLKTRPERAVEKAIKGMLPKNRLGEQMYRKLNVYKGEAHPHQAQKPEAWTIRD</sequence>
<comment type="function">
    <text evidence="1">This protein is one of the early assembly proteins of the 50S ribosomal subunit, although it is not seen to bind rRNA by itself. It is important during the early stages of 50S assembly.</text>
</comment>
<comment type="subunit">
    <text evidence="1">Part of the 50S ribosomal subunit.</text>
</comment>
<comment type="similarity">
    <text evidence="1">Belongs to the universal ribosomal protein uL13 family.</text>
</comment>
<organism>
    <name type="scientific">Heliobacterium modesticaldum (strain ATCC 51547 / Ice1)</name>
    <dbReference type="NCBI Taxonomy" id="498761"/>
    <lineage>
        <taxon>Bacteria</taxon>
        <taxon>Bacillati</taxon>
        <taxon>Bacillota</taxon>
        <taxon>Clostridia</taxon>
        <taxon>Eubacteriales</taxon>
        <taxon>Heliobacteriaceae</taxon>
        <taxon>Heliomicrobium</taxon>
    </lineage>
</organism>
<gene>
    <name evidence="1" type="primary">rplM</name>
    <name type="ordered locus">Helmi_13650</name>
    <name type="ORF">HM1_1413</name>
</gene>
<accession>B0TC91</accession>
<feature type="chain" id="PRO_1000144136" description="Large ribosomal subunit protein uL13">
    <location>
        <begin position="1"/>
        <end position="144"/>
    </location>
</feature>
<reference key="1">
    <citation type="journal article" date="2008" name="J. Bacteriol.">
        <title>The genome of Heliobacterium modesticaldum, a phototrophic representative of the Firmicutes containing the simplest photosynthetic apparatus.</title>
        <authorList>
            <person name="Sattley W.M."/>
            <person name="Madigan M.T."/>
            <person name="Swingley W.D."/>
            <person name="Cheung P.C."/>
            <person name="Clocksin K.M."/>
            <person name="Conrad A.L."/>
            <person name="Dejesa L.C."/>
            <person name="Honchak B.M."/>
            <person name="Jung D.O."/>
            <person name="Karbach L.E."/>
            <person name="Kurdoglu A."/>
            <person name="Lahiri S."/>
            <person name="Mastrian S.D."/>
            <person name="Page L.E."/>
            <person name="Taylor H.L."/>
            <person name="Wang Z.T."/>
            <person name="Raymond J."/>
            <person name="Chen M."/>
            <person name="Blankenship R.E."/>
            <person name="Touchman J.W."/>
        </authorList>
    </citation>
    <scope>NUCLEOTIDE SEQUENCE [LARGE SCALE GENOMIC DNA]</scope>
    <source>
        <strain>ATCC 51547 / Ice1</strain>
    </source>
</reference>
<dbReference type="EMBL" id="CP000930">
    <property type="protein sequence ID" value="ABZ83990.1"/>
    <property type="molecule type" value="Genomic_DNA"/>
</dbReference>
<dbReference type="RefSeq" id="WP_012282506.1">
    <property type="nucleotide sequence ID" value="NC_010337.2"/>
</dbReference>
<dbReference type="SMR" id="B0TC91"/>
<dbReference type="STRING" id="498761.HM1_1413"/>
<dbReference type="KEGG" id="hmo:HM1_1413"/>
<dbReference type="eggNOG" id="COG0102">
    <property type="taxonomic scope" value="Bacteria"/>
</dbReference>
<dbReference type="HOGENOM" id="CLU_082184_2_2_9"/>
<dbReference type="OrthoDB" id="9801330at2"/>
<dbReference type="Proteomes" id="UP000008550">
    <property type="component" value="Chromosome"/>
</dbReference>
<dbReference type="GO" id="GO:0022625">
    <property type="term" value="C:cytosolic large ribosomal subunit"/>
    <property type="evidence" value="ECO:0007669"/>
    <property type="project" value="TreeGrafter"/>
</dbReference>
<dbReference type="GO" id="GO:0003729">
    <property type="term" value="F:mRNA binding"/>
    <property type="evidence" value="ECO:0007669"/>
    <property type="project" value="TreeGrafter"/>
</dbReference>
<dbReference type="GO" id="GO:0003735">
    <property type="term" value="F:structural constituent of ribosome"/>
    <property type="evidence" value="ECO:0007669"/>
    <property type="project" value="InterPro"/>
</dbReference>
<dbReference type="GO" id="GO:0017148">
    <property type="term" value="P:negative regulation of translation"/>
    <property type="evidence" value="ECO:0007669"/>
    <property type="project" value="TreeGrafter"/>
</dbReference>
<dbReference type="GO" id="GO:0006412">
    <property type="term" value="P:translation"/>
    <property type="evidence" value="ECO:0007669"/>
    <property type="project" value="UniProtKB-UniRule"/>
</dbReference>
<dbReference type="CDD" id="cd00392">
    <property type="entry name" value="Ribosomal_L13"/>
    <property type="match status" value="1"/>
</dbReference>
<dbReference type="FunFam" id="3.90.1180.10:FF:000001">
    <property type="entry name" value="50S ribosomal protein L13"/>
    <property type="match status" value="1"/>
</dbReference>
<dbReference type="Gene3D" id="3.90.1180.10">
    <property type="entry name" value="Ribosomal protein L13"/>
    <property type="match status" value="1"/>
</dbReference>
<dbReference type="HAMAP" id="MF_01366">
    <property type="entry name" value="Ribosomal_uL13"/>
    <property type="match status" value="1"/>
</dbReference>
<dbReference type="InterPro" id="IPR005822">
    <property type="entry name" value="Ribosomal_uL13"/>
</dbReference>
<dbReference type="InterPro" id="IPR005823">
    <property type="entry name" value="Ribosomal_uL13_bac-type"/>
</dbReference>
<dbReference type="InterPro" id="IPR023563">
    <property type="entry name" value="Ribosomal_uL13_CS"/>
</dbReference>
<dbReference type="InterPro" id="IPR036899">
    <property type="entry name" value="Ribosomal_uL13_sf"/>
</dbReference>
<dbReference type="NCBIfam" id="TIGR01066">
    <property type="entry name" value="rplM_bact"/>
    <property type="match status" value="1"/>
</dbReference>
<dbReference type="PANTHER" id="PTHR11545:SF2">
    <property type="entry name" value="LARGE RIBOSOMAL SUBUNIT PROTEIN UL13M"/>
    <property type="match status" value="1"/>
</dbReference>
<dbReference type="PANTHER" id="PTHR11545">
    <property type="entry name" value="RIBOSOMAL PROTEIN L13"/>
    <property type="match status" value="1"/>
</dbReference>
<dbReference type="Pfam" id="PF00572">
    <property type="entry name" value="Ribosomal_L13"/>
    <property type="match status" value="1"/>
</dbReference>
<dbReference type="PIRSF" id="PIRSF002181">
    <property type="entry name" value="Ribosomal_L13"/>
    <property type="match status" value="1"/>
</dbReference>
<dbReference type="SUPFAM" id="SSF52161">
    <property type="entry name" value="Ribosomal protein L13"/>
    <property type="match status" value="1"/>
</dbReference>
<dbReference type="PROSITE" id="PS00783">
    <property type="entry name" value="RIBOSOMAL_L13"/>
    <property type="match status" value="1"/>
</dbReference>
<keyword id="KW-1185">Reference proteome</keyword>
<keyword id="KW-0687">Ribonucleoprotein</keyword>
<keyword id="KW-0689">Ribosomal protein</keyword>
<name>RL13_HELMI</name>
<protein>
    <recommendedName>
        <fullName evidence="1">Large ribosomal subunit protein uL13</fullName>
    </recommendedName>
    <alternativeName>
        <fullName evidence="2">50S ribosomal protein L13</fullName>
    </alternativeName>
</protein>